<gene>
    <name evidence="1" type="primary">groES</name>
    <name evidence="1" type="synonym">groS</name>
    <name type="ordered locus">SEN4099</name>
</gene>
<feature type="chain" id="PRO_1000129700" description="Co-chaperonin GroES">
    <location>
        <begin position="1"/>
        <end position="97"/>
    </location>
</feature>
<comment type="function">
    <text evidence="1">Together with the chaperonin GroEL, plays an essential role in assisting protein folding. The GroEL-GroES system forms a nano-cage that allows encapsulation of the non-native substrate proteins and provides a physical environment optimized to promote and accelerate protein folding. GroES binds to the apical surface of the GroEL ring, thereby capping the opening of the GroEL channel.</text>
</comment>
<comment type="subunit">
    <text evidence="1">Heptamer of 7 subunits arranged in a ring. Interacts with the chaperonin GroEL.</text>
</comment>
<comment type="subcellular location">
    <subcellularLocation>
        <location evidence="1">Cytoplasm</location>
    </subcellularLocation>
</comment>
<comment type="similarity">
    <text evidence="1">Belongs to the GroES chaperonin family.</text>
</comment>
<protein>
    <recommendedName>
        <fullName evidence="1">Co-chaperonin GroES</fullName>
    </recommendedName>
    <alternativeName>
        <fullName evidence="1">10 kDa chaperonin</fullName>
    </alternativeName>
    <alternativeName>
        <fullName evidence="1">Chaperonin-10</fullName>
        <shortName evidence="1">Cpn10</shortName>
    </alternativeName>
</protein>
<keyword id="KW-0143">Chaperone</keyword>
<keyword id="KW-0963">Cytoplasm</keyword>
<reference key="1">
    <citation type="journal article" date="2008" name="Genome Res.">
        <title>Comparative genome analysis of Salmonella enteritidis PT4 and Salmonella gallinarum 287/91 provides insights into evolutionary and host adaptation pathways.</title>
        <authorList>
            <person name="Thomson N.R."/>
            <person name="Clayton D.J."/>
            <person name="Windhorst D."/>
            <person name="Vernikos G."/>
            <person name="Davidson S."/>
            <person name="Churcher C."/>
            <person name="Quail M.A."/>
            <person name="Stevens M."/>
            <person name="Jones M.A."/>
            <person name="Watson M."/>
            <person name="Barron A."/>
            <person name="Layton A."/>
            <person name="Pickard D."/>
            <person name="Kingsley R.A."/>
            <person name="Bignell A."/>
            <person name="Clark L."/>
            <person name="Harris B."/>
            <person name="Ormond D."/>
            <person name="Abdellah Z."/>
            <person name="Brooks K."/>
            <person name="Cherevach I."/>
            <person name="Chillingworth T."/>
            <person name="Woodward J."/>
            <person name="Norberczak H."/>
            <person name="Lord A."/>
            <person name="Arrowsmith C."/>
            <person name="Jagels K."/>
            <person name="Moule S."/>
            <person name="Mungall K."/>
            <person name="Saunders M."/>
            <person name="Whitehead S."/>
            <person name="Chabalgoity J.A."/>
            <person name="Maskell D."/>
            <person name="Humphreys T."/>
            <person name="Roberts M."/>
            <person name="Barrow P.A."/>
            <person name="Dougan G."/>
            <person name="Parkhill J."/>
        </authorList>
    </citation>
    <scope>NUCLEOTIDE SEQUENCE [LARGE SCALE GENOMIC DNA]</scope>
    <source>
        <strain>P125109</strain>
    </source>
</reference>
<accession>B5R004</accession>
<name>CH10_SALEP</name>
<dbReference type="EMBL" id="AM933172">
    <property type="protein sequence ID" value="CAR35659.1"/>
    <property type="molecule type" value="Genomic_DNA"/>
</dbReference>
<dbReference type="RefSeq" id="WP_000027827.1">
    <property type="nucleotide sequence ID" value="NC_011294.1"/>
</dbReference>
<dbReference type="SMR" id="B5R004"/>
<dbReference type="KEGG" id="set:SEN4099"/>
<dbReference type="HOGENOM" id="CLU_132825_1_1_6"/>
<dbReference type="Proteomes" id="UP000000613">
    <property type="component" value="Chromosome"/>
</dbReference>
<dbReference type="GO" id="GO:0005737">
    <property type="term" value="C:cytoplasm"/>
    <property type="evidence" value="ECO:0007669"/>
    <property type="project" value="UniProtKB-SubCell"/>
</dbReference>
<dbReference type="GO" id="GO:0005524">
    <property type="term" value="F:ATP binding"/>
    <property type="evidence" value="ECO:0007669"/>
    <property type="project" value="InterPro"/>
</dbReference>
<dbReference type="GO" id="GO:0046872">
    <property type="term" value="F:metal ion binding"/>
    <property type="evidence" value="ECO:0007669"/>
    <property type="project" value="TreeGrafter"/>
</dbReference>
<dbReference type="GO" id="GO:0044183">
    <property type="term" value="F:protein folding chaperone"/>
    <property type="evidence" value="ECO:0007669"/>
    <property type="project" value="InterPro"/>
</dbReference>
<dbReference type="GO" id="GO:0051087">
    <property type="term" value="F:protein-folding chaperone binding"/>
    <property type="evidence" value="ECO:0007669"/>
    <property type="project" value="TreeGrafter"/>
</dbReference>
<dbReference type="GO" id="GO:0051082">
    <property type="term" value="F:unfolded protein binding"/>
    <property type="evidence" value="ECO:0007669"/>
    <property type="project" value="TreeGrafter"/>
</dbReference>
<dbReference type="GO" id="GO:0051085">
    <property type="term" value="P:chaperone cofactor-dependent protein refolding"/>
    <property type="evidence" value="ECO:0007669"/>
    <property type="project" value="TreeGrafter"/>
</dbReference>
<dbReference type="CDD" id="cd00320">
    <property type="entry name" value="cpn10"/>
    <property type="match status" value="1"/>
</dbReference>
<dbReference type="FunFam" id="2.30.33.40:FF:000001">
    <property type="entry name" value="10 kDa chaperonin"/>
    <property type="match status" value="1"/>
</dbReference>
<dbReference type="Gene3D" id="2.30.33.40">
    <property type="entry name" value="GroES chaperonin"/>
    <property type="match status" value="1"/>
</dbReference>
<dbReference type="HAMAP" id="MF_00580">
    <property type="entry name" value="CH10"/>
    <property type="match status" value="1"/>
</dbReference>
<dbReference type="InterPro" id="IPR020818">
    <property type="entry name" value="Chaperonin_GroES"/>
</dbReference>
<dbReference type="InterPro" id="IPR037124">
    <property type="entry name" value="Chaperonin_GroES_sf"/>
</dbReference>
<dbReference type="InterPro" id="IPR018369">
    <property type="entry name" value="Chaprnonin_Cpn10_CS"/>
</dbReference>
<dbReference type="InterPro" id="IPR011032">
    <property type="entry name" value="GroES-like_sf"/>
</dbReference>
<dbReference type="NCBIfam" id="NF001526">
    <property type="entry name" value="PRK00364.1-1"/>
    <property type="match status" value="1"/>
</dbReference>
<dbReference type="NCBIfam" id="NF001527">
    <property type="entry name" value="PRK00364.1-2"/>
    <property type="match status" value="1"/>
</dbReference>
<dbReference type="NCBIfam" id="NF001531">
    <property type="entry name" value="PRK00364.2-2"/>
    <property type="match status" value="1"/>
</dbReference>
<dbReference type="PANTHER" id="PTHR10772">
    <property type="entry name" value="10 KDA HEAT SHOCK PROTEIN"/>
    <property type="match status" value="1"/>
</dbReference>
<dbReference type="PANTHER" id="PTHR10772:SF58">
    <property type="entry name" value="CO-CHAPERONIN GROES"/>
    <property type="match status" value="1"/>
</dbReference>
<dbReference type="Pfam" id="PF00166">
    <property type="entry name" value="Cpn10"/>
    <property type="match status" value="1"/>
</dbReference>
<dbReference type="PRINTS" id="PR00297">
    <property type="entry name" value="CHAPERONIN10"/>
</dbReference>
<dbReference type="SMART" id="SM00883">
    <property type="entry name" value="Cpn10"/>
    <property type="match status" value="1"/>
</dbReference>
<dbReference type="SUPFAM" id="SSF50129">
    <property type="entry name" value="GroES-like"/>
    <property type="match status" value="1"/>
</dbReference>
<dbReference type="PROSITE" id="PS00681">
    <property type="entry name" value="CHAPERONINS_CPN10"/>
    <property type="match status" value="1"/>
</dbReference>
<organism>
    <name type="scientific">Salmonella enteritidis PT4 (strain P125109)</name>
    <dbReference type="NCBI Taxonomy" id="550537"/>
    <lineage>
        <taxon>Bacteria</taxon>
        <taxon>Pseudomonadati</taxon>
        <taxon>Pseudomonadota</taxon>
        <taxon>Gammaproteobacteria</taxon>
        <taxon>Enterobacterales</taxon>
        <taxon>Enterobacteriaceae</taxon>
        <taxon>Salmonella</taxon>
    </lineage>
</organism>
<evidence type="ECO:0000255" key="1">
    <source>
        <dbReference type="HAMAP-Rule" id="MF_00580"/>
    </source>
</evidence>
<sequence length="97" mass="10318">MSIRPLHDRVIVKRKEVESKSAGGIVLTGSAAGKSTRGEIIAVGKGRILDNGTVQPLDVKVGDIVIFNDGYGVKSEKIDNEEVLIMSESDILAIVEA</sequence>
<proteinExistence type="inferred from homology"/>